<keyword id="KW-0997">Cell inner membrane</keyword>
<keyword id="KW-1003">Cell membrane</keyword>
<keyword id="KW-0407">Ion channel</keyword>
<keyword id="KW-0406">Ion transport</keyword>
<keyword id="KW-0472">Membrane</keyword>
<keyword id="KW-0479">Metal-binding</keyword>
<keyword id="KW-1185">Reference proteome</keyword>
<keyword id="KW-0915">Sodium</keyword>
<keyword id="KW-0812">Transmembrane</keyword>
<keyword id="KW-1133">Transmembrane helix</keyword>
<keyword id="KW-0813">Transport</keyword>
<evidence type="ECO:0000255" key="1">
    <source>
        <dbReference type="HAMAP-Rule" id="MF_00454"/>
    </source>
</evidence>
<comment type="function">
    <text evidence="1">Fluoride-specific ion channel. Important for reducing fluoride concentration in the cell, thus reducing its toxicity.</text>
</comment>
<comment type="catalytic activity">
    <reaction evidence="1">
        <text>fluoride(in) = fluoride(out)</text>
        <dbReference type="Rhea" id="RHEA:76159"/>
        <dbReference type="ChEBI" id="CHEBI:17051"/>
    </reaction>
    <physiologicalReaction direction="left-to-right" evidence="1">
        <dbReference type="Rhea" id="RHEA:76160"/>
    </physiologicalReaction>
</comment>
<comment type="activity regulation">
    <text evidence="1">Na(+) is not transported, but it plays an essential structural role and its presence is essential for fluoride channel function.</text>
</comment>
<comment type="subcellular location">
    <subcellularLocation>
        <location evidence="1">Cell inner membrane</location>
        <topology evidence="1">Multi-pass membrane protein</topology>
    </subcellularLocation>
</comment>
<comment type="similarity">
    <text evidence="1">Belongs to the fluoride channel Fluc/FEX (TC 1.A.43) family.</text>
</comment>
<gene>
    <name evidence="1" type="primary">fluC</name>
    <name evidence="1" type="synonym">crcB</name>
    <name type="ordered locus">CHAB381_1007</name>
</gene>
<feature type="chain" id="PRO_1000026378" description="Fluoride-specific ion channel FluC">
    <location>
        <begin position="1"/>
        <end position="126"/>
    </location>
</feature>
<feature type="transmembrane region" description="Helical" evidence="1">
    <location>
        <begin position="5"/>
        <end position="25"/>
    </location>
</feature>
<feature type="transmembrane region" description="Helical" evidence="1">
    <location>
        <begin position="34"/>
        <end position="54"/>
    </location>
</feature>
<feature type="transmembrane region" description="Helical" evidence="1">
    <location>
        <begin position="71"/>
        <end position="91"/>
    </location>
</feature>
<feature type="transmembrane region" description="Helical" evidence="1">
    <location>
        <begin position="100"/>
        <end position="120"/>
    </location>
</feature>
<feature type="binding site" evidence="1">
    <location>
        <position position="76"/>
    </location>
    <ligand>
        <name>Na(+)</name>
        <dbReference type="ChEBI" id="CHEBI:29101"/>
        <note>structural</note>
    </ligand>
</feature>
<feature type="binding site" evidence="1">
    <location>
        <position position="79"/>
    </location>
    <ligand>
        <name>Na(+)</name>
        <dbReference type="ChEBI" id="CHEBI:29101"/>
        <note>structural</note>
    </ligand>
</feature>
<organism>
    <name type="scientific">Campylobacter hominis (strain ATCC BAA-381 / DSM 21671 / CCUG 45161 / LMG 19568 / NCTC 13146 / CH001A)</name>
    <dbReference type="NCBI Taxonomy" id="360107"/>
    <lineage>
        <taxon>Bacteria</taxon>
        <taxon>Pseudomonadati</taxon>
        <taxon>Campylobacterota</taxon>
        <taxon>Epsilonproteobacteria</taxon>
        <taxon>Campylobacterales</taxon>
        <taxon>Campylobacteraceae</taxon>
        <taxon>Campylobacter</taxon>
    </lineage>
</organism>
<dbReference type="EMBL" id="CP000776">
    <property type="protein sequence ID" value="ABS50973.1"/>
    <property type="molecule type" value="Genomic_DNA"/>
</dbReference>
<dbReference type="RefSeq" id="WP_012108864.1">
    <property type="nucleotide sequence ID" value="NC_009714.1"/>
</dbReference>
<dbReference type="SMR" id="A7I227"/>
<dbReference type="STRING" id="360107.CHAB381_1007"/>
<dbReference type="KEGG" id="cha:CHAB381_1007"/>
<dbReference type="eggNOG" id="COG0239">
    <property type="taxonomic scope" value="Bacteria"/>
</dbReference>
<dbReference type="HOGENOM" id="CLU_114342_3_0_7"/>
<dbReference type="OrthoDB" id="9806299at2"/>
<dbReference type="Proteomes" id="UP000002407">
    <property type="component" value="Chromosome"/>
</dbReference>
<dbReference type="GO" id="GO:0005886">
    <property type="term" value="C:plasma membrane"/>
    <property type="evidence" value="ECO:0007669"/>
    <property type="project" value="UniProtKB-SubCell"/>
</dbReference>
<dbReference type="GO" id="GO:0062054">
    <property type="term" value="F:fluoride channel activity"/>
    <property type="evidence" value="ECO:0007669"/>
    <property type="project" value="UniProtKB-UniRule"/>
</dbReference>
<dbReference type="GO" id="GO:0046872">
    <property type="term" value="F:metal ion binding"/>
    <property type="evidence" value="ECO:0007669"/>
    <property type="project" value="UniProtKB-KW"/>
</dbReference>
<dbReference type="GO" id="GO:0140114">
    <property type="term" value="P:cellular detoxification of fluoride"/>
    <property type="evidence" value="ECO:0007669"/>
    <property type="project" value="UniProtKB-UniRule"/>
</dbReference>
<dbReference type="HAMAP" id="MF_00454">
    <property type="entry name" value="FluC"/>
    <property type="match status" value="1"/>
</dbReference>
<dbReference type="InterPro" id="IPR003691">
    <property type="entry name" value="FluC"/>
</dbReference>
<dbReference type="PANTHER" id="PTHR28259">
    <property type="entry name" value="FLUORIDE EXPORT PROTEIN 1-RELATED"/>
    <property type="match status" value="1"/>
</dbReference>
<dbReference type="PANTHER" id="PTHR28259:SF1">
    <property type="entry name" value="FLUORIDE EXPORT PROTEIN 1-RELATED"/>
    <property type="match status" value="1"/>
</dbReference>
<dbReference type="Pfam" id="PF02537">
    <property type="entry name" value="CRCB"/>
    <property type="match status" value="1"/>
</dbReference>
<proteinExistence type="inferred from homology"/>
<accession>A7I227</accession>
<name>FLUC_CAMHC</name>
<sequence length="126" mass="14210">MFYTILCVGTGGFVGAILRFLFYFGFAQFFSQKYIFIATICVNIIGSFIIGFVLNIATTYAINYNFKNFLVTGLLGALTTFSTFTYENAVFLNHGEISKFFLNITMSIILCLIFCFLGIYTAKIIH</sequence>
<protein>
    <recommendedName>
        <fullName evidence="1">Fluoride-specific ion channel FluC</fullName>
    </recommendedName>
</protein>
<reference key="1">
    <citation type="submission" date="2007-07" db="EMBL/GenBank/DDBJ databases">
        <title>Complete genome sequence of Campylobacter hominis ATCC BAA-381, a commensal isolated from the human gastrointestinal tract.</title>
        <authorList>
            <person name="Fouts D.E."/>
            <person name="Mongodin E.F."/>
            <person name="Puiu D."/>
            <person name="Sebastian Y."/>
            <person name="Miller W.G."/>
            <person name="Mandrell R.E."/>
            <person name="Nelson K.E."/>
        </authorList>
    </citation>
    <scope>NUCLEOTIDE SEQUENCE [LARGE SCALE GENOMIC DNA]</scope>
    <source>
        <strain>ATCC BAA-381 / DSM 21671 / CCUG 45161 / LMG 19568 / NCTC 13146 / CH001A</strain>
    </source>
</reference>